<feature type="chain" id="PRO_0000196978" description="2,3,4,5-tetrahydropyridine-2,6-dicarboxylate N-succinyltransferase">
    <location>
        <begin position="1"/>
        <end position="274"/>
    </location>
</feature>
<feature type="binding site" evidence="1">
    <location>
        <position position="104"/>
    </location>
    <ligand>
        <name>substrate</name>
    </ligand>
</feature>
<feature type="binding site" evidence="1">
    <location>
        <position position="141"/>
    </location>
    <ligand>
        <name>substrate</name>
    </ligand>
</feature>
<feature type="helix" evidence="3">
    <location>
        <begin position="1"/>
        <end position="13"/>
    </location>
</feature>
<feature type="helix" evidence="3">
    <location>
        <begin position="15"/>
        <end position="17"/>
    </location>
</feature>
<feature type="turn" evidence="3">
    <location>
        <begin position="20"/>
        <end position="22"/>
    </location>
</feature>
<feature type="helix" evidence="3">
    <location>
        <begin position="25"/>
        <end position="39"/>
    </location>
</feature>
<feature type="strand" evidence="3">
    <location>
        <begin position="45"/>
        <end position="49"/>
    </location>
</feature>
<feature type="strand" evidence="3">
    <location>
        <begin position="52"/>
        <end position="55"/>
    </location>
</feature>
<feature type="helix" evidence="3">
    <location>
        <begin position="57"/>
        <end position="68"/>
    </location>
</feature>
<feature type="strand" evidence="3">
    <location>
        <begin position="73"/>
        <end position="77"/>
    </location>
</feature>
<feature type="strand" evidence="3">
    <location>
        <begin position="80"/>
        <end position="86"/>
    </location>
</feature>
<feature type="turn" evidence="3">
    <location>
        <begin position="89"/>
        <end position="92"/>
    </location>
</feature>
<feature type="helix" evidence="3">
    <location>
        <begin position="95"/>
        <end position="101"/>
    </location>
</feature>
<feature type="strand" evidence="3">
    <location>
        <begin position="110"/>
        <end position="112"/>
    </location>
</feature>
<feature type="strand" evidence="3">
    <location>
        <begin position="125"/>
        <end position="128"/>
    </location>
</feature>
<feature type="strand" evidence="3">
    <location>
        <begin position="144"/>
        <end position="146"/>
    </location>
</feature>
<feature type="strand" evidence="3">
    <location>
        <begin position="214"/>
        <end position="216"/>
    </location>
</feature>
<feature type="turn" evidence="3">
    <location>
        <begin position="217"/>
        <end position="219"/>
    </location>
</feature>
<feature type="strand" evidence="3">
    <location>
        <begin position="225"/>
        <end position="227"/>
    </location>
</feature>
<feature type="strand" evidence="3">
    <location>
        <begin position="231"/>
        <end position="239"/>
    </location>
</feature>
<feature type="strand" evidence="3">
    <location>
        <begin position="246"/>
        <end position="255"/>
    </location>
</feature>
<feature type="helix" evidence="3">
    <location>
        <begin position="266"/>
        <end position="270"/>
    </location>
</feature>
<name>DAPD_YERPE</name>
<organism>
    <name type="scientific">Yersinia pestis</name>
    <dbReference type="NCBI Taxonomy" id="632"/>
    <lineage>
        <taxon>Bacteria</taxon>
        <taxon>Pseudomonadati</taxon>
        <taxon>Pseudomonadota</taxon>
        <taxon>Gammaproteobacteria</taxon>
        <taxon>Enterobacterales</taxon>
        <taxon>Yersiniaceae</taxon>
        <taxon>Yersinia</taxon>
    </lineage>
</organism>
<comment type="catalytic activity">
    <reaction evidence="1">
        <text>(S)-2,3,4,5-tetrahydrodipicolinate + succinyl-CoA + H2O = (S)-2-succinylamino-6-oxoheptanedioate + CoA</text>
        <dbReference type="Rhea" id="RHEA:17325"/>
        <dbReference type="ChEBI" id="CHEBI:15377"/>
        <dbReference type="ChEBI" id="CHEBI:15685"/>
        <dbReference type="ChEBI" id="CHEBI:16845"/>
        <dbReference type="ChEBI" id="CHEBI:57287"/>
        <dbReference type="ChEBI" id="CHEBI:57292"/>
        <dbReference type="EC" id="2.3.1.117"/>
    </reaction>
</comment>
<comment type="pathway">
    <text evidence="1">Amino-acid biosynthesis; L-lysine biosynthesis via DAP pathway; LL-2,6-diaminopimelate from (S)-tetrahydrodipicolinate (succinylase route): step 1/3.</text>
</comment>
<comment type="subunit">
    <text evidence="1">Homotrimer.</text>
</comment>
<comment type="subcellular location">
    <subcellularLocation>
        <location evidence="1">Cytoplasm</location>
    </subcellularLocation>
</comment>
<comment type="similarity">
    <text evidence="1">Belongs to the transferase hexapeptide repeat family.</text>
</comment>
<comment type="sequence caution" evidence="2">
    <conflict type="erroneous initiation">
        <sequence resource="EMBL-CDS" id="AAM86690"/>
    </conflict>
</comment>
<comment type="sequence caution" evidence="2">
    <conflict type="erroneous initiation">
        <sequence resource="EMBL-CDS" id="AAS62994"/>
    </conflict>
</comment>
<protein>
    <recommendedName>
        <fullName evidence="1">2,3,4,5-tetrahydropyridine-2,6-dicarboxylate N-succinyltransferase</fullName>
        <ecNumber evidence="1">2.3.1.117</ecNumber>
    </recommendedName>
    <alternativeName>
        <fullName evidence="1">Tetrahydrodipicolinate N-succinyltransferase</fullName>
        <shortName evidence="1">THDP succinyltransferase</shortName>
        <shortName evidence="1">THP succinyltransferase</shortName>
        <shortName evidence="1">Tetrahydropicolinate succinylase</shortName>
    </alternativeName>
</protein>
<accession>Q8ZH69</accession>
<accession>Q0WI04</accession>
<accession>Q74S45</accession>
<accession>Q8CZY9</accession>
<evidence type="ECO:0000255" key="1">
    <source>
        <dbReference type="HAMAP-Rule" id="MF_00811"/>
    </source>
</evidence>
<evidence type="ECO:0000305" key="2"/>
<evidence type="ECO:0007829" key="3">
    <source>
        <dbReference type="PDB" id="3GOS"/>
    </source>
</evidence>
<dbReference type="EC" id="2.3.1.117" evidence="1"/>
<dbReference type="EMBL" id="AL590842">
    <property type="protein sequence ID" value="CAL19706.1"/>
    <property type="molecule type" value="Genomic_DNA"/>
</dbReference>
<dbReference type="EMBL" id="AE009952">
    <property type="protein sequence ID" value="AAM86690.1"/>
    <property type="status" value="ALT_INIT"/>
    <property type="molecule type" value="Genomic_DNA"/>
</dbReference>
<dbReference type="EMBL" id="AE017042">
    <property type="protein sequence ID" value="AAS62994.1"/>
    <property type="status" value="ALT_INIT"/>
    <property type="molecule type" value="Genomic_DNA"/>
</dbReference>
<dbReference type="PIR" id="AH0127">
    <property type="entry name" value="AH0127"/>
</dbReference>
<dbReference type="RefSeq" id="WP_002212128.1">
    <property type="nucleotide sequence ID" value="NZ_WUCM01000044.1"/>
</dbReference>
<dbReference type="RefSeq" id="YP_002346084.1">
    <property type="nucleotide sequence ID" value="NC_003143.1"/>
</dbReference>
<dbReference type="PDB" id="3GOS">
    <property type="method" value="X-ray"/>
    <property type="resolution" value="1.80 A"/>
    <property type="chains" value="A/B/C=1-274"/>
</dbReference>
<dbReference type="PDBsum" id="3GOS"/>
<dbReference type="SMR" id="Q8ZH69"/>
<dbReference type="IntAct" id="Q8ZH69">
    <property type="interactions" value="4"/>
</dbReference>
<dbReference type="STRING" id="214092.YPO1041"/>
<dbReference type="PaxDb" id="214092-YPO1041"/>
<dbReference type="EnsemblBacteria" id="AAS62994">
    <property type="protein sequence ID" value="AAS62994"/>
    <property type="gene ID" value="YP_2810"/>
</dbReference>
<dbReference type="GeneID" id="96662373"/>
<dbReference type="KEGG" id="ype:YPO1041"/>
<dbReference type="KEGG" id="ypk:y3140"/>
<dbReference type="KEGG" id="ypm:YP_2810"/>
<dbReference type="PATRIC" id="fig|214092.21.peg.1329"/>
<dbReference type="eggNOG" id="COG2171">
    <property type="taxonomic scope" value="Bacteria"/>
</dbReference>
<dbReference type="HOGENOM" id="CLU_050859_0_1_6"/>
<dbReference type="OMA" id="YFPIQKM"/>
<dbReference type="OrthoDB" id="9775362at2"/>
<dbReference type="UniPathway" id="UPA00034">
    <property type="reaction ID" value="UER00019"/>
</dbReference>
<dbReference type="EvolutionaryTrace" id="Q8ZH69"/>
<dbReference type="Proteomes" id="UP000000815">
    <property type="component" value="Chromosome"/>
</dbReference>
<dbReference type="Proteomes" id="UP000001019">
    <property type="component" value="Chromosome"/>
</dbReference>
<dbReference type="Proteomes" id="UP000002490">
    <property type="component" value="Chromosome"/>
</dbReference>
<dbReference type="GO" id="GO:0005737">
    <property type="term" value="C:cytoplasm"/>
    <property type="evidence" value="ECO:0007669"/>
    <property type="project" value="UniProtKB-SubCell"/>
</dbReference>
<dbReference type="GO" id="GO:0008666">
    <property type="term" value="F:2,3,4,5-tetrahydropyridine-2,6-dicarboxylate N-succinyltransferase activity"/>
    <property type="evidence" value="ECO:0007669"/>
    <property type="project" value="UniProtKB-UniRule"/>
</dbReference>
<dbReference type="GO" id="GO:0016779">
    <property type="term" value="F:nucleotidyltransferase activity"/>
    <property type="evidence" value="ECO:0000318"/>
    <property type="project" value="GO_Central"/>
</dbReference>
<dbReference type="GO" id="GO:0019877">
    <property type="term" value="P:diaminopimelate biosynthetic process"/>
    <property type="evidence" value="ECO:0000318"/>
    <property type="project" value="GO_Central"/>
</dbReference>
<dbReference type="GO" id="GO:0009085">
    <property type="term" value="P:lysine biosynthetic process"/>
    <property type="evidence" value="ECO:0000318"/>
    <property type="project" value="GO_Central"/>
</dbReference>
<dbReference type="GO" id="GO:0009089">
    <property type="term" value="P:lysine biosynthetic process via diaminopimelate"/>
    <property type="evidence" value="ECO:0007669"/>
    <property type="project" value="UniProtKB-UniRule"/>
</dbReference>
<dbReference type="CDD" id="cd03350">
    <property type="entry name" value="LbH_THP_succinylT"/>
    <property type="match status" value="1"/>
</dbReference>
<dbReference type="FunFam" id="2.160.10.10:FF:000004">
    <property type="entry name" value="2,3,4,5-tetrahydropyridine-2,6-dicarboxylate N-succinyltransferase"/>
    <property type="match status" value="1"/>
</dbReference>
<dbReference type="Gene3D" id="2.160.10.10">
    <property type="entry name" value="Hexapeptide repeat proteins"/>
    <property type="match status" value="1"/>
</dbReference>
<dbReference type="Gene3D" id="1.10.166.10">
    <property type="entry name" value="Tetrahydrodipicolinate-N-succinyltransferase, N-terminal domain"/>
    <property type="match status" value="1"/>
</dbReference>
<dbReference type="HAMAP" id="MF_00811">
    <property type="entry name" value="DapD"/>
    <property type="match status" value="1"/>
</dbReference>
<dbReference type="InterPro" id="IPR005664">
    <property type="entry name" value="DapD_Trfase_Hexpep_rpt_fam"/>
</dbReference>
<dbReference type="InterPro" id="IPR001451">
    <property type="entry name" value="Hexapep"/>
</dbReference>
<dbReference type="InterPro" id="IPR018357">
    <property type="entry name" value="Hexapep_transf_CS"/>
</dbReference>
<dbReference type="InterPro" id="IPR023180">
    <property type="entry name" value="THP_succinylTrfase_dom1"/>
</dbReference>
<dbReference type="InterPro" id="IPR037133">
    <property type="entry name" value="THP_succinylTrfase_N_sf"/>
</dbReference>
<dbReference type="InterPro" id="IPR011004">
    <property type="entry name" value="Trimer_LpxA-like_sf"/>
</dbReference>
<dbReference type="NCBIfam" id="TIGR00965">
    <property type="entry name" value="dapD"/>
    <property type="match status" value="1"/>
</dbReference>
<dbReference type="NCBIfam" id="NF008808">
    <property type="entry name" value="PRK11830.1"/>
    <property type="match status" value="1"/>
</dbReference>
<dbReference type="PANTHER" id="PTHR19136:SF52">
    <property type="entry name" value="2,3,4,5-TETRAHYDROPYRIDINE-2,6-DICARBOXYLATE N-SUCCINYLTRANSFERASE"/>
    <property type="match status" value="1"/>
</dbReference>
<dbReference type="PANTHER" id="PTHR19136">
    <property type="entry name" value="MOLYBDENUM COFACTOR GUANYLYLTRANSFERASE"/>
    <property type="match status" value="1"/>
</dbReference>
<dbReference type="Pfam" id="PF14602">
    <property type="entry name" value="Hexapep_2"/>
    <property type="match status" value="1"/>
</dbReference>
<dbReference type="Pfam" id="PF14805">
    <property type="entry name" value="THDPS_N_2"/>
    <property type="match status" value="1"/>
</dbReference>
<dbReference type="SUPFAM" id="SSF51161">
    <property type="entry name" value="Trimeric LpxA-like enzymes"/>
    <property type="match status" value="1"/>
</dbReference>
<dbReference type="PROSITE" id="PS00101">
    <property type="entry name" value="HEXAPEP_TRANSFERASES"/>
    <property type="match status" value="1"/>
</dbReference>
<keyword id="KW-0002">3D-structure</keyword>
<keyword id="KW-0012">Acyltransferase</keyword>
<keyword id="KW-0028">Amino-acid biosynthesis</keyword>
<keyword id="KW-0963">Cytoplasm</keyword>
<keyword id="KW-0220">Diaminopimelate biosynthesis</keyword>
<keyword id="KW-0457">Lysine biosynthesis</keyword>
<keyword id="KW-1185">Reference proteome</keyword>
<keyword id="KW-0677">Repeat</keyword>
<keyword id="KW-0808">Transferase</keyword>
<sequence>MQQLQNVIETAFERRADITPANVDTVTREAITHVIDLLDTGALRVAEKIDGQWVTHQWLKKAVLLSFRINDNQVMEGAETRYYDKVPMKFAGYDEARFQREGFRVVPPATVRKGAFIARNTVLMPSYVNIGAFVDEGTMVDTWATVGSCAQIGKNVHLSGGVGIGGVLEPLQANPTIIEDNCFVGARSEVVEGVIVEEGSVISMGVFIGQSTRIYDRETGEVHYGRVPAGSVVVSGNLPSKDGSYSLYCAVIVKKVDAKTRSKVGINELLRTID</sequence>
<proteinExistence type="evidence at protein level"/>
<gene>
    <name evidence="1" type="primary">dapD</name>
    <name type="ordered locus">YPO1041</name>
    <name type="ordered locus">y3140</name>
    <name type="ordered locus">YP_2810</name>
</gene>
<reference key="1">
    <citation type="journal article" date="2001" name="Nature">
        <title>Genome sequence of Yersinia pestis, the causative agent of plague.</title>
        <authorList>
            <person name="Parkhill J."/>
            <person name="Wren B.W."/>
            <person name="Thomson N.R."/>
            <person name="Titball R.W."/>
            <person name="Holden M.T.G."/>
            <person name="Prentice M.B."/>
            <person name="Sebaihia M."/>
            <person name="James K.D."/>
            <person name="Churcher C.M."/>
            <person name="Mungall K.L."/>
            <person name="Baker S."/>
            <person name="Basham D."/>
            <person name="Bentley S.D."/>
            <person name="Brooks K."/>
            <person name="Cerdeno-Tarraga A.-M."/>
            <person name="Chillingworth T."/>
            <person name="Cronin A."/>
            <person name="Davies R.M."/>
            <person name="Davis P."/>
            <person name="Dougan G."/>
            <person name="Feltwell T."/>
            <person name="Hamlin N."/>
            <person name="Holroyd S."/>
            <person name="Jagels K."/>
            <person name="Karlyshev A.V."/>
            <person name="Leather S."/>
            <person name="Moule S."/>
            <person name="Oyston P.C.F."/>
            <person name="Quail M.A."/>
            <person name="Rutherford K.M."/>
            <person name="Simmonds M."/>
            <person name="Skelton J."/>
            <person name="Stevens K."/>
            <person name="Whitehead S."/>
            <person name="Barrell B.G."/>
        </authorList>
    </citation>
    <scope>NUCLEOTIDE SEQUENCE [LARGE SCALE GENOMIC DNA]</scope>
    <source>
        <strain>CO-92 / Biovar Orientalis</strain>
    </source>
</reference>
<reference key="2">
    <citation type="journal article" date="2002" name="J. Bacteriol.">
        <title>Genome sequence of Yersinia pestis KIM.</title>
        <authorList>
            <person name="Deng W."/>
            <person name="Burland V."/>
            <person name="Plunkett G. III"/>
            <person name="Boutin A."/>
            <person name="Mayhew G.F."/>
            <person name="Liss P."/>
            <person name="Perna N.T."/>
            <person name="Rose D.J."/>
            <person name="Mau B."/>
            <person name="Zhou S."/>
            <person name="Schwartz D.C."/>
            <person name="Fetherston J.D."/>
            <person name="Lindler L.E."/>
            <person name="Brubaker R.R."/>
            <person name="Plano G.V."/>
            <person name="Straley S.C."/>
            <person name="McDonough K.A."/>
            <person name="Nilles M.L."/>
            <person name="Matson J.S."/>
            <person name="Blattner F.R."/>
            <person name="Perry R.D."/>
        </authorList>
    </citation>
    <scope>NUCLEOTIDE SEQUENCE [LARGE SCALE GENOMIC DNA]</scope>
    <source>
        <strain>KIM10+ / Biovar Mediaevalis</strain>
    </source>
</reference>
<reference key="3">
    <citation type="journal article" date="2004" name="DNA Res.">
        <title>Complete genome sequence of Yersinia pestis strain 91001, an isolate avirulent to humans.</title>
        <authorList>
            <person name="Song Y."/>
            <person name="Tong Z."/>
            <person name="Wang J."/>
            <person name="Wang L."/>
            <person name="Guo Z."/>
            <person name="Han Y."/>
            <person name="Zhang J."/>
            <person name="Pei D."/>
            <person name="Zhou D."/>
            <person name="Qin H."/>
            <person name="Pang X."/>
            <person name="Han Y."/>
            <person name="Zhai J."/>
            <person name="Li M."/>
            <person name="Cui B."/>
            <person name="Qi Z."/>
            <person name="Jin L."/>
            <person name="Dai R."/>
            <person name="Chen F."/>
            <person name="Li S."/>
            <person name="Ye C."/>
            <person name="Du Z."/>
            <person name="Lin W."/>
            <person name="Wang J."/>
            <person name="Yu J."/>
            <person name="Yang H."/>
            <person name="Wang J."/>
            <person name="Huang P."/>
            <person name="Yang R."/>
        </authorList>
    </citation>
    <scope>NUCLEOTIDE SEQUENCE [LARGE SCALE GENOMIC DNA]</scope>
    <source>
        <strain>91001 / Biovar Mediaevalis</strain>
    </source>
</reference>